<protein>
    <recommendedName>
        <fullName evidence="1">3-isopropylmalate dehydratase large subunit</fullName>
        <ecNumber evidence="1">4.2.1.33</ecNumber>
    </recommendedName>
    <alternativeName>
        <fullName evidence="1">Alpha-IPM isomerase</fullName>
        <shortName evidence="1">IPMI</shortName>
    </alternativeName>
    <alternativeName>
        <fullName evidence="1">Isopropylmalate isomerase</fullName>
    </alternativeName>
</protein>
<accession>B7GNM7</accession>
<accession>E8MNW1</accession>
<reference key="1">
    <citation type="journal article" date="2008" name="Proc. Natl. Acad. Sci. U.S.A.">
        <title>The genome sequence of Bifidobacterium longum subsp. infantis reveals adaptations for milk utilization within the infant microbiome.</title>
        <authorList>
            <person name="Sela D.A."/>
            <person name="Chapman J."/>
            <person name="Adeuya A."/>
            <person name="Kim J.H."/>
            <person name="Chen F."/>
            <person name="Whitehead T.R."/>
            <person name="Lapidus A."/>
            <person name="Rokhsar D.S."/>
            <person name="Lebrilla C.B."/>
            <person name="German J.B."/>
            <person name="Price N.P."/>
            <person name="Richardson P.M."/>
            <person name="Mills D.A."/>
        </authorList>
    </citation>
    <scope>NUCLEOTIDE SEQUENCE [LARGE SCALE GENOMIC DNA]</scope>
    <source>
        <strain>ATCC 15697 / DSM 20088 / JCM 1222 / NCTC 11817 / S12</strain>
    </source>
</reference>
<reference key="2">
    <citation type="journal article" date="2011" name="Nature">
        <title>Bifidobacteria can protect from enteropathogenic infection through production of acetate.</title>
        <authorList>
            <person name="Fukuda S."/>
            <person name="Toh H."/>
            <person name="Hase K."/>
            <person name="Oshima K."/>
            <person name="Nakanishi Y."/>
            <person name="Yoshimura K."/>
            <person name="Tobe T."/>
            <person name="Clarke J.M."/>
            <person name="Topping D.L."/>
            <person name="Suzuki T."/>
            <person name="Taylor T.D."/>
            <person name="Itoh K."/>
            <person name="Kikuchi J."/>
            <person name="Morita H."/>
            <person name="Hattori M."/>
            <person name="Ohno H."/>
        </authorList>
    </citation>
    <scope>NUCLEOTIDE SEQUENCE [LARGE SCALE GENOMIC DNA]</scope>
    <source>
        <strain>ATCC 15697 / DSM 20088 / JCM 1222 / NCTC 11817 / S12</strain>
    </source>
</reference>
<sequence length="467" mass="50182">MGTTLAEKVWADHLVRKGSDGAPDLLYIDLMLMHEVTSPQAFEGLRLAGRKPRHVDQLIATEDHNTPTVDIDRPNPDKTSALQLTTLEKNCKEFGVRLHPLGDADQGIVHAFAPILGLTQPGMTIVCGDSHTSTHGAFGALAFGIGTSEVEHVMATQTLSLKPFKTMAINVEGKLPADATAKDIILAIIAKIGTGGGQGYVIEYRGEAIRNLTMDERMTVCNMSIEAGARAGMIAPDETTFEYLKGRPHAPEGELWDQAVAYWKTLKTDDDAVFDKVVDIDASTLGPYVTWGTNPGQGLPITASVPEPDKIADATKRAAAERAITYMGLKPGMPIKDIAVDTVFIGSCTNGRIDDLRQAAAIMKGHHKAENIHRVLVVPASSRVRLQAEKEGLDKVFEDFGAEWRNAGCSMCLGMNPDKLVPNERSISTSNRNFEGRQGKGSRTHLASPSVAAATAIRGTISSPADL</sequence>
<organism>
    <name type="scientific">Bifidobacterium longum subsp. infantis (strain ATCC 15697 / DSM 20088 / JCM 1222 / NCTC 11817 / S12)</name>
    <dbReference type="NCBI Taxonomy" id="391904"/>
    <lineage>
        <taxon>Bacteria</taxon>
        <taxon>Bacillati</taxon>
        <taxon>Actinomycetota</taxon>
        <taxon>Actinomycetes</taxon>
        <taxon>Bifidobacteriales</taxon>
        <taxon>Bifidobacteriaceae</taxon>
        <taxon>Bifidobacterium</taxon>
    </lineage>
</organism>
<gene>
    <name evidence="1" type="primary">leuC</name>
    <name type="ordered locus">Blon_2325</name>
    <name type="ordered locus">BLIJ_2400</name>
</gene>
<evidence type="ECO:0000255" key="1">
    <source>
        <dbReference type="HAMAP-Rule" id="MF_01026"/>
    </source>
</evidence>
<evidence type="ECO:0000256" key="2">
    <source>
        <dbReference type="SAM" id="MobiDB-lite"/>
    </source>
</evidence>
<evidence type="ECO:0000305" key="3"/>
<dbReference type="EC" id="4.2.1.33" evidence="1"/>
<dbReference type="EMBL" id="CP001095">
    <property type="protein sequence ID" value="ACJ53383.1"/>
    <property type="molecule type" value="Genomic_DNA"/>
</dbReference>
<dbReference type="EMBL" id="AP010889">
    <property type="protein sequence ID" value="BAJ69977.1"/>
    <property type="status" value="ALT_INIT"/>
    <property type="molecule type" value="Genomic_DNA"/>
</dbReference>
<dbReference type="RefSeq" id="WP_012578553.1">
    <property type="nucleotide sequence ID" value="NC_011593.1"/>
</dbReference>
<dbReference type="SMR" id="B7GNM7"/>
<dbReference type="KEGG" id="bln:Blon_2325"/>
<dbReference type="KEGG" id="blon:BLIJ_2400"/>
<dbReference type="PATRIC" id="fig|391904.8.peg.2402"/>
<dbReference type="HOGENOM" id="CLU_006714_3_4_11"/>
<dbReference type="UniPathway" id="UPA00048">
    <property type="reaction ID" value="UER00071"/>
</dbReference>
<dbReference type="Proteomes" id="UP000001360">
    <property type="component" value="Chromosome"/>
</dbReference>
<dbReference type="GO" id="GO:0003861">
    <property type="term" value="F:3-isopropylmalate dehydratase activity"/>
    <property type="evidence" value="ECO:0007669"/>
    <property type="project" value="UniProtKB-UniRule"/>
</dbReference>
<dbReference type="GO" id="GO:0051539">
    <property type="term" value="F:4 iron, 4 sulfur cluster binding"/>
    <property type="evidence" value="ECO:0007669"/>
    <property type="project" value="UniProtKB-KW"/>
</dbReference>
<dbReference type="GO" id="GO:0046872">
    <property type="term" value="F:metal ion binding"/>
    <property type="evidence" value="ECO:0007669"/>
    <property type="project" value="UniProtKB-KW"/>
</dbReference>
<dbReference type="GO" id="GO:0009098">
    <property type="term" value="P:L-leucine biosynthetic process"/>
    <property type="evidence" value="ECO:0007669"/>
    <property type="project" value="UniProtKB-UniRule"/>
</dbReference>
<dbReference type="CDD" id="cd01583">
    <property type="entry name" value="IPMI"/>
    <property type="match status" value="1"/>
</dbReference>
<dbReference type="FunFam" id="3.30.499.10:FF:000007">
    <property type="entry name" value="3-isopropylmalate dehydratase large subunit"/>
    <property type="match status" value="1"/>
</dbReference>
<dbReference type="Gene3D" id="3.30.499.10">
    <property type="entry name" value="Aconitase, domain 3"/>
    <property type="match status" value="2"/>
</dbReference>
<dbReference type="HAMAP" id="MF_01026">
    <property type="entry name" value="LeuC_type1"/>
    <property type="match status" value="1"/>
</dbReference>
<dbReference type="InterPro" id="IPR004430">
    <property type="entry name" value="3-IsopropMal_deHydase_lsu"/>
</dbReference>
<dbReference type="InterPro" id="IPR015931">
    <property type="entry name" value="Acnase/IPM_dHydase_lsu_aba_1/3"/>
</dbReference>
<dbReference type="InterPro" id="IPR001030">
    <property type="entry name" value="Acoase/IPM_deHydtase_lsu_aba"/>
</dbReference>
<dbReference type="InterPro" id="IPR018136">
    <property type="entry name" value="Aconitase_4Fe-4S_BS"/>
</dbReference>
<dbReference type="InterPro" id="IPR036008">
    <property type="entry name" value="Aconitase_4Fe-4S_dom"/>
</dbReference>
<dbReference type="InterPro" id="IPR050067">
    <property type="entry name" value="IPM_dehydratase_rel_enz"/>
</dbReference>
<dbReference type="InterPro" id="IPR033941">
    <property type="entry name" value="IPMI_cat"/>
</dbReference>
<dbReference type="NCBIfam" id="TIGR00170">
    <property type="entry name" value="leuC"/>
    <property type="match status" value="1"/>
</dbReference>
<dbReference type="NCBIfam" id="NF004016">
    <property type="entry name" value="PRK05478.1"/>
    <property type="match status" value="1"/>
</dbReference>
<dbReference type="NCBIfam" id="NF009116">
    <property type="entry name" value="PRK12466.1"/>
    <property type="match status" value="1"/>
</dbReference>
<dbReference type="PANTHER" id="PTHR43822:SF9">
    <property type="entry name" value="3-ISOPROPYLMALATE DEHYDRATASE"/>
    <property type="match status" value="1"/>
</dbReference>
<dbReference type="PANTHER" id="PTHR43822">
    <property type="entry name" value="HOMOACONITASE, MITOCHONDRIAL-RELATED"/>
    <property type="match status" value="1"/>
</dbReference>
<dbReference type="Pfam" id="PF00330">
    <property type="entry name" value="Aconitase"/>
    <property type="match status" value="1"/>
</dbReference>
<dbReference type="PRINTS" id="PR00415">
    <property type="entry name" value="ACONITASE"/>
</dbReference>
<dbReference type="SUPFAM" id="SSF53732">
    <property type="entry name" value="Aconitase iron-sulfur domain"/>
    <property type="match status" value="1"/>
</dbReference>
<dbReference type="PROSITE" id="PS00450">
    <property type="entry name" value="ACONITASE_1"/>
    <property type="match status" value="1"/>
</dbReference>
<dbReference type="PROSITE" id="PS01244">
    <property type="entry name" value="ACONITASE_2"/>
    <property type="match status" value="1"/>
</dbReference>
<keyword id="KW-0004">4Fe-4S</keyword>
<keyword id="KW-0028">Amino-acid biosynthesis</keyword>
<keyword id="KW-0100">Branched-chain amino acid biosynthesis</keyword>
<keyword id="KW-0408">Iron</keyword>
<keyword id="KW-0411">Iron-sulfur</keyword>
<keyword id="KW-0432">Leucine biosynthesis</keyword>
<keyword id="KW-0456">Lyase</keyword>
<keyword id="KW-0479">Metal-binding</keyword>
<proteinExistence type="inferred from homology"/>
<comment type="function">
    <text evidence="1">Catalyzes the isomerization between 2-isopropylmalate and 3-isopropylmalate, via the formation of 2-isopropylmaleate.</text>
</comment>
<comment type="catalytic activity">
    <reaction evidence="1">
        <text>(2R,3S)-3-isopropylmalate = (2S)-2-isopropylmalate</text>
        <dbReference type="Rhea" id="RHEA:32287"/>
        <dbReference type="ChEBI" id="CHEBI:1178"/>
        <dbReference type="ChEBI" id="CHEBI:35121"/>
        <dbReference type="EC" id="4.2.1.33"/>
    </reaction>
</comment>
<comment type="cofactor">
    <cofactor evidence="1">
        <name>[4Fe-4S] cluster</name>
        <dbReference type="ChEBI" id="CHEBI:49883"/>
    </cofactor>
    <text evidence="1">Binds 1 [4Fe-4S] cluster per subunit.</text>
</comment>
<comment type="pathway">
    <text evidence="1">Amino-acid biosynthesis; L-leucine biosynthesis; L-leucine from 3-methyl-2-oxobutanoate: step 2/4.</text>
</comment>
<comment type="subunit">
    <text evidence="1">Heterodimer of LeuC and LeuD.</text>
</comment>
<comment type="similarity">
    <text evidence="1">Belongs to the aconitase/IPM isomerase family. LeuC type 1 subfamily.</text>
</comment>
<comment type="sequence caution" evidence="3">
    <conflict type="erroneous initiation">
        <sequence resource="EMBL-CDS" id="BAJ69977"/>
    </conflict>
    <text>Extended N-terminus.</text>
</comment>
<name>LEUC_BIFLS</name>
<feature type="chain" id="PRO_1000149355" description="3-isopropylmalate dehydratase large subunit">
    <location>
        <begin position="1"/>
        <end position="467"/>
    </location>
</feature>
<feature type="region of interest" description="Disordered" evidence="2">
    <location>
        <begin position="423"/>
        <end position="449"/>
    </location>
</feature>
<feature type="binding site" evidence="1">
    <location>
        <position position="348"/>
    </location>
    <ligand>
        <name>[4Fe-4S] cluster</name>
        <dbReference type="ChEBI" id="CHEBI:49883"/>
    </ligand>
</feature>
<feature type="binding site" evidence="1">
    <location>
        <position position="409"/>
    </location>
    <ligand>
        <name>[4Fe-4S] cluster</name>
        <dbReference type="ChEBI" id="CHEBI:49883"/>
    </ligand>
</feature>
<feature type="binding site" evidence="1">
    <location>
        <position position="412"/>
    </location>
    <ligand>
        <name>[4Fe-4S] cluster</name>
        <dbReference type="ChEBI" id="CHEBI:49883"/>
    </ligand>
</feature>